<proteinExistence type="inferred from homology"/>
<dbReference type="EC" id="6.1.1.15" evidence="1"/>
<dbReference type="EMBL" id="CP001348">
    <property type="protein sequence ID" value="ACL74731.1"/>
    <property type="molecule type" value="Genomic_DNA"/>
</dbReference>
<dbReference type="RefSeq" id="WP_012634795.1">
    <property type="nucleotide sequence ID" value="NC_011898.1"/>
</dbReference>
<dbReference type="SMR" id="B8I5R4"/>
<dbReference type="STRING" id="394503.Ccel_0345"/>
<dbReference type="KEGG" id="cce:Ccel_0345"/>
<dbReference type="eggNOG" id="COG0441">
    <property type="taxonomic scope" value="Bacteria"/>
</dbReference>
<dbReference type="HOGENOM" id="CLU_001882_4_2_9"/>
<dbReference type="OrthoDB" id="9809052at2"/>
<dbReference type="Proteomes" id="UP000001349">
    <property type="component" value="Chromosome"/>
</dbReference>
<dbReference type="GO" id="GO:0017101">
    <property type="term" value="C:aminoacyl-tRNA synthetase multienzyme complex"/>
    <property type="evidence" value="ECO:0007669"/>
    <property type="project" value="TreeGrafter"/>
</dbReference>
<dbReference type="GO" id="GO:0005737">
    <property type="term" value="C:cytoplasm"/>
    <property type="evidence" value="ECO:0007669"/>
    <property type="project" value="UniProtKB-SubCell"/>
</dbReference>
<dbReference type="GO" id="GO:0005524">
    <property type="term" value="F:ATP binding"/>
    <property type="evidence" value="ECO:0007669"/>
    <property type="project" value="UniProtKB-UniRule"/>
</dbReference>
<dbReference type="GO" id="GO:0140096">
    <property type="term" value="F:catalytic activity, acting on a protein"/>
    <property type="evidence" value="ECO:0007669"/>
    <property type="project" value="UniProtKB-ARBA"/>
</dbReference>
<dbReference type="GO" id="GO:0004827">
    <property type="term" value="F:proline-tRNA ligase activity"/>
    <property type="evidence" value="ECO:0007669"/>
    <property type="project" value="UniProtKB-UniRule"/>
</dbReference>
<dbReference type="GO" id="GO:0016740">
    <property type="term" value="F:transferase activity"/>
    <property type="evidence" value="ECO:0007669"/>
    <property type="project" value="UniProtKB-ARBA"/>
</dbReference>
<dbReference type="GO" id="GO:0006433">
    <property type="term" value="P:prolyl-tRNA aminoacylation"/>
    <property type="evidence" value="ECO:0007669"/>
    <property type="project" value="UniProtKB-UniRule"/>
</dbReference>
<dbReference type="CDD" id="cd00862">
    <property type="entry name" value="ProRS_anticodon_zinc"/>
    <property type="match status" value="1"/>
</dbReference>
<dbReference type="CDD" id="cd00778">
    <property type="entry name" value="ProRS_core_arch_euk"/>
    <property type="match status" value="1"/>
</dbReference>
<dbReference type="FunFam" id="3.40.50.800:FF:000005">
    <property type="entry name" value="bifunctional glutamate/proline--tRNA ligase"/>
    <property type="match status" value="1"/>
</dbReference>
<dbReference type="FunFam" id="3.30.110.30:FF:000005">
    <property type="entry name" value="Proline--tRNA ligase"/>
    <property type="match status" value="1"/>
</dbReference>
<dbReference type="FunFam" id="3.30.930.10:FF:000023">
    <property type="entry name" value="Proline--tRNA ligase"/>
    <property type="match status" value="1"/>
</dbReference>
<dbReference type="Gene3D" id="3.40.50.800">
    <property type="entry name" value="Anticodon-binding domain"/>
    <property type="match status" value="1"/>
</dbReference>
<dbReference type="Gene3D" id="3.30.930.10">
    <property type="entry name" value="Bira Bifunctional Protein, Domain 2"/>
    <property type="match status" value="1"/>
</dbReference>
<dbReference type="Gene3D" id="3.30.110.30">
    <property type="entry name" value="C-terminal domain of ProRS"/>
    <property type="match status" value="1"/>
</dbReference>
<dbReference type="HAMAP" id="MF_01571">
    <property type="entry name" value="Pro_tRNA_synth_type3"/>
    <property type="match status" value="1"/>
</dbReference>
<dbReference type="InterPro" id="IPR002314">
    <property type="entry name" value="aa-tRNA-synt_IIb"/>
</dbReference>
<dbReference type="InterPro" id="IPR006195">
    <property type="entry name" value="aa-tRNA-synth_II"/>
</dbReference>
<dbReference type="InterPro" id="IPR045864">
    <property type="entry name" value="aa-tRNA-synth_II/BPL/LPL"/>
</dbReference>
<dbReference type="InterPro" id="IPR004154">
    <property type="entry name" value="Anticodon-bd"/>
</dbReference>
<dbReference type="InterPro" id="IPR036621">
    <property type="entry name" value="Anticodon-bd_dom_sf"/>
</dbReference>
<dbReference type="InterPro" id="IPR002316">
    <property type="entry name" value="Pro-tRNA-ligase_IIa"/>
</dbReference>
<dbReference type="InterPro" id="IPR004499">
    <property type="entry name" value="Pro-tRNA-ligase_IIa_arc-type"/>
</dbReference>
<dbReference type="InterPro" id="IPR016061">
    <property type="entry name" value="Pro-tRNA_ligase_II_C"/>
</dbReference>
<dbReference type="InterPro" id="IPR017449">
    <property type="entry name" value="Pro-tRNA_synth_II"/>
</dbReference>
<dbReference type="InterPro" id="IPR033721">
    <property type="entry name" value="ProRS_core_arch_euk"/>
</dbReference>
<dbReference type="NCBIfam" id="TIGR00408">
    <property type="entry name" value="proS_fam_I"/>
    <property type="match status" value="1"/>
</dbReference>
<dbReference type="PANTHER" id="PTHR43382:SF2">
    <property type="entry name" value="BIFUNCTIONAL GLUTAMATE_PROLINE--TRNA LIGASE"/>
    <property type="match status" value="1"/>
</dbReference>
<dbReference type="PANTHER" id="PTHR43382">
    <property type="entry name" value="PROLYL-TRNA SYNTHETASE"/>
    <property type="match status" value="1"/>
</dbReference>
<dbReference type="Pfam" id="PF03129">
    <property type="entry name" value="HGTP_anticodon"/>
    <property type="match status" value="1"/>
</dbReference>
<dbReference type="Pfam" id="PF09180">
    <property type="entry name" value="ProRS-C_1"/>
    <property type="match status" value="1"/>
</dbReference>
<dbReference type="Pfam" id="PF00587">
    <property type="entry name" value="tRNA-synt_2b"/>
    <property type="match status" value="1"/>
</dbReference>
<dbReference type="PRINTS" id="PR01046">
    <property type="entry name" value="TRNASYNTHPRO"/>
</dbReference>
<dbReference type="SMART" id="SM00946">
    <property type="entry name" value="ProRS-C_1"/>
    <property type="match status" value="1"/>
</dbReference>
<dbReference type="SUPFAM" id="SSF64586">
    <property type="entry name" value="C-terminal domain of ProRS"/>
    <property type="match status" value="1"/>
</dbReference>
<dbReference type="SUPFAM" id="SSF52954">
    <property type="entry name" value="Class II aaRS ABD-related"/>
    <property type="match status" value="1"/>
</dbReference>
<dbReference type="SUPFAM" id="SSF55681">
    <property type="entry name" value="Class II aaRS and biotin synthetases"/>
    <property type="match status" value="1"/>
</dbReference>
<dbReference type="PROSITE" id="PS50862">
    <property type="entry name" value="AA_TRNA_LIGASE_II"/>
    <property type="match status" value="1"/>
</dbReference>
<protein>
    <recommendedName>
        <fullName evidence="1">Proline--tRNA ligase</fullName>
        <ecNumber evidence="1">6.1.1.15</ecNumber>
    </recommendedName>
    <alternativeName>
        <fullName evidence="1">Prolyl-tRNA synthetase</fullName>
        <shortName evidence="1">ProRS</shortName>
    </alternativeName>
</protein>
<reference key="1">
    <citation type="submission" date="2009-01" db="EMBL/GenBank/DDBJ databases">
        <title>Complete sequence of Clostridium cellulolyticum H10.</title>
        <authorList>
            <consortium name="US DOE Joint Genome Institute"/>
            <person name="Lucas S."/>
            <person name="Copeland A."/>
            <person name="Lapidus A."/>
            <person name="Glavina del Rio T."/>
            <person name="Dalin E."/>
            <person name="Tice H."/>
            <person name="Bruce D."/>
            <person name="Goodwin L."/>
            <person name="Pitluck S."/>
            <person name="Chertkov O."/>
            <person name="Saunders E."/>
            <person name="Brettin T."/>
            <person name="Detter J.C."/>
            <person name="Han C."/>
            <person name="Larimer F."/>
            <person name="Land M."/>
            <person name="Hauser L."/>
            <person name="Kyrpides N."/>
            <person name="Ivanova N."/>
            <person name="Zhou J."/>
            <person name="Richardson P."/>
        </authorList>
    </citation>
    <scope>NUCLEOTIDE SEQUENCE [LARGE SCALE GENOMIC DNA]</scope>
    <source>
        <strain>ATCC 35319 / DSM 5812 / JCM 6584 / H10</strain>
    </source>
</reference>
<accession>B8I5R4</accession>
<organism>
    <name type="scientific">Ruminiclostridium cellulolyticum (strain ATCC 35319 / DSM 5812 / JCM 6584 / H10)</name>
    <name type="common">Clostridium cellulolyticum</name>
    <dbReference type="NCBI Taxonomy" id="394503"/>
    <lineage>
        <taxon>Bacteria</taxon>
        <taxon>Bacillati</taxon>
        <taxon>Bacillota</taxon>
        <taxon>Clostridia</taxon>
        <taxon>Eubacteriales</taxon>
        <taxon>Oscillospiraceae</taxon>
        <taxon>Ruminiclostridium</taxon>
    </lineage>
</organism>
<evidence type="ECO:0000255" key="1">
    <source>
        <dbReference type="HAMAP-Rule" id="MF_01571"/>
    </source>
</evidence>
<feature type="chain" id="PRO_1000215559" description="Proline--tRNA ligase">
    <location>
        <begin position="1"/>
        <end position="478"/>
    </location>
</feature>
<keyword id="KW-0030">Aminoacyl-tRNA synthetase</keyword>
<keyword id="KW-0067">ATP-binding</keyword>
<keyword id="KW-0963">Cytoplasm</keyword>
<keyword id="KW-0436">Ligase</keyword>
<keyword id="KW-0547">Nucleotide-binding</keyword>
<keyword id="KW-0648">Protein biosynthesis</keyword>
<keyword id="KW-1185">Reference proteome</keyword>
<comment type="function">
    <text evidence="1">Catalyzes the attachment of proline to tRNA(Pro) in a two-step reaction: proline is first activated by ATP to form Pro-AMP and then transferred to the acceptor end of tRNA(Pro).</text>
</comment>
<comment type="catalytic activity">
    <reaction evidence="1">
        <text>tRNA(Pro) + L-proline + ATP = L-prolyl-tRNA(Pro) + AMP + diphosphate</text>
        <dbReference type="Rhea" id="RHEA:14305"/>
        <dbReference type="Rhea" id="RHEA-COMP:9700"/>
        <dbReference type="Rhea" id="RHEA-COMP:9702"/>
        <dbReference type="ChEBI" id="CHEBI:30616"/>
        <dbReference type="ChEBI" id="CHEBI:33019"/>
        <dbReference type="ChEBI" id="CHEBI:60039"/>
        <dbReference type="ChEBI" id="CHEBI:78442"/>
        <dbReference type="ChEBI" id="CHEBI:78532"/>
        <dbReference type="ChEBI" id="CHEBI:456215"/>
        <dbReference type="EC" id="6.1.1.15"/>
    </reaction>
</comment>
<comment type="subunit">
    <text evidence="1">Homodimer.</text>
</comment>
<comment type="subcellular location">
    <subcellularLocation>
        <location evidence="1">Cytoplasm</location>
    </subcellularLocation>
</comment>
<comment type="domain">
    <text evidence="1">Consists of three domains: the N-terminal catalytic domain, the anticodon-binding domain and the C-terminal extension.</text>
</comment>
<comment type="similarity">
    <text evidence="1">Belongs to the class-II aminoacyl-tRNA synthetase family. ProS type 3 subfamily.</text>
</comment>
<sequence>MAKDKKLVEEITSMNDDFGQWYTDVIKKAELVDYSSVRGCMVIKPYGYAIWENIQKSLDTRFKETGHENVYMPMFIPESLLLKEKEHVEGFAPEVAWVTHGGDEKLTERLCVRPTSETLFCEHYSNSIQSYRDLPKLYNQWCSVVRWEKTTRPFLRTLEFLWQEGHTAHATAEEAQEETIRMLNVYADVLENVLAIPVIKGRKTEKEKFAGAHATYTVESLMHDGKALQSGTSHNFGDGFAKAFDIQYTDKNNQLQYVHQTSWGVTTRLIGAIIMVHGDDSGLVLPPAIAPTQLVIIPVSQHKEGVLEKANELKQKLSAKFRVKMDDSDKMPGWKFSEYEMKGVPLRIEIGPKDIEKNQAVLVRRDNREKIFVSLDNLEETVVNTLADVQKSLLEKARELRDKKTYIAATLEEFDQIINSTPGFVKGMWCGERECEDLVKEKTGATARCMPLEQEQLSDKCMCCGKPAKSMVYWGKAY</sequence>
<name>SYP_RUMCH</name>
<gene>
    <name evidence="1" type="primary">proS</name>
    <name type="ordered locus">Ccel_0345</name>
</gene>